<name>EX7S_KLEP7</name>
<evidence type="ECO:0000255" key="1">
    <source>
        <dbReference type="HAMAP-Rule" id="MF_00337"/>
    </source>
</evidence>
<reference key="1">
    <citation type="submission" date="2006-09" db="EMBL/GenBank/DDBJ databases">
        <authorList>
            <consortium name="The Klebsiella pneumonia Genome Sequencing Project"/>
            <person name="McClelland M."/>
            <person name="Sanderson E.K."/>
            <person name="Spieth J."/>
            <person name="Clifton W.S."/>
            <person name="Latreille P."/>
            <person name="Sabo A."/>
            <person name="Pepin K."/>
            <person name="Bhonagiri V."/>
            <person name="Porwollik S."/>
            <person name="Ali J."/>
            <person name="Wilson R.K."/>
        </authorList>
    </citation>
    <scope>NUCLEOTIDE SEQUENCE [LARGE SCALE GENOMIC DNA]</scope>
    <source>
        <strain>ATCC 700721 / MGH 78578</strain>
    </source>
</reference>
<organism>
    <name type="scientific">Klebsiella pneumoniae subsp. pneumoniae (strain ATCC 700721 / MGH 78578)</name>
    <dbReference type="NCBI Taxonomy" id="272620"/>
    <lineage>
        <taxon>Bacteria</taxon>
        <taxon>Pseudomonadati</taxon>
        <taxon>Pseudomonadota</taxon>
        <taxon>Gammaproteobacteria</taxon>
        <taxon>Enterobacterales</taxon>
        <taxon>Enterobacteriaceae</taxon>
        <taxon>Klebsiella/Raoultella group</taxon>
        <taxon>Klebsiella</taxon>
        <taxon>Klebsiella pneumoniae complex</taxon>
    </lineage>
</organism>
<gene>
    <name evidence="1" type="primary">xseB</name>
    <name type="ordered locus">KPN78578_03650</name>
    <name type="ORF">KPN_00374</name>
</gene>
<protein>
    <recommendedName>
        <fullName evidence="1">Exodeoxyribonuclease 7 small subunit</fullName>
        <ecNumber evidence="1">3.1.11.6</ecNumber>
    </recommendedName>
    <alternativeName>
        <fullName evidence="1">Exodeoxyribonuclease VII small subunit</fullName>
        <shortName evidence="1">Exonuclease VII small subunit</shortName>
    </alternativeName>
</protein>
<dbReference type="EC" id="3.1.11.6" evidence="1"/>
<dbReference type="EMBL" id="CP000647">
    <property type="protein sequence ID" value="ABR75826.1"/>
    <property type="molecule type" value="Genomic_DNA"/>
</dbReference>
<dbReference type="RefSeq" id="WP_002891398.1">
    <property type="nucleotide sequence ID" value="NC_009648.1"/>
</dbReference>
<dbReference type="SMR" id="A6T5F5"/>
<dbReference type="STRING" id="272620.KPN_00374"/>
<dbReference type="PaxDb" id="272620-KPN_00374"/>
<dbReference type="EnsemblBacteria" id="ABR75826">
    <property type="protein sequence ID" value="ABR75826"/>
    <property type="gene ID" value="KPN_00374"/>
</dbReference>
<dbReference type="GeneID" id="93274725"/>
<dbReference type="KEGG" id="kpn:KPN_00374"/>
<dbReference type="HOGENOM" id="CLU_145918_3_3_6"/>
<dbReference type="Proteomes" id="UP000000265">
    <property type="component" value="Chromosome"/>
</dbReference>
<dbReference type="GO" id="GO:0005829">
    <property type="term" value="C:cytosol"/>
    <property type="evidence" value="ECO:0007669"/>
    <property type="project" value="TreeGrafter"/>
</dbReference>
<dbReference type="GO" id="GO:0009318">
    <property type="term" value="C:exodeoxyribonuclease VII complex"/>
    <property type="evidence" value="ECO:0007669"/>
    <property type="project" value="InterPro"/>
</dbReference>
<dbReference type="GO" id="GO:0008855">
    <property type="term" value="F:exodeoxyribonuclease VII activity"/>
    <property type="evidence" value="ECO:0007669"/>
    <property type="project" value="UniProtKB-UniRule"/>
</dbReference>
<dbReference type="GO" id="GO:0006308">
    <property type="term" value="P:DNA catabolic process"/>
    <property type="evidence" value="ECO:0007669"/>
    <property type="project" value="UniProtKB-UniRule"/>
</dbReference>
<dbReference type="FunFam" id="1.10.287.1040:FF:000001">
    <property type="entry name" value="Exodeoxyribonuclease 7 small subunit"/>
    <property type="match status" value="1"/>
</dbReference>
<dbReference type="Gene3D" id="1.10.287.1040">
    <property type="entry name" value="Exonuclease VII, small subunit"/>
    <property type="match status" value="1"/>
</dbReference>
<dbReference type="HAMAP" id="MF_00337">
    <property type="entry name" value="Exonuc_7_S"/>
    <property type="match status" value="1"/>
</dbReference>
<dbReference type="InterPro" id="IPR003761">
    <property type="entry name" value="Exonuc_VII_S"/>
</dbReference>
<dbReference type="InterPro" id="IPR037004">
    <property type="entry name" value="Exonuc_VII_ssu_sf"/>
</dbReference>
<dbReference type="NCBIfam" id="NF002137">
    <property type="entry name" value="PRK00977.1-1"/>
    <property type="match status" value="1"/>
</dbReference>
<dbReference type="NCBIfam" id="NF002140">
    <property type="entry name" value="PRK00977.1-4"/>
    <property type="match status" value="1"/>
</dbReference>
<dbReference type="NCBIfam" id="TIGR01280">
    <property type="entry name" value="xseB"/>
    <property type="match status" value="1"/>
</dbReference>
<dbReference type="PANTHER" id="PTHR34137">
    <property type="entry name" value="EXODEOXYRIBONUCLEASE 7 SMALL SUBUNIT"/>
    <property type="match status" value="1"/>
</dbReference>
<dbReference type="PANTHER" id="PTHR34137:SF1">
    <property type="entry name" value="EXODEOXYRIBONUCLEASE 7 SMALL SUBUNIT"/>
    <property type="match status" value="1"/>
</dbReference>
<dbReference type="Pfam" id="PF02609">
    <property type="entry name" value="Exonuc_VII_S"/>
    <property type="match status" value="1"/>
</dbReference>
<dbReference type="PIRSF" id="PIRSF006488">
    <property type="entry name" value="Exonuc_VII_S"/>
    <property type="match status" value="1"/>
</dbReference>
<dbReference type="SUPFAM" id="SSF116842">
    <property type="entry name" value="XseB-like"/>
    <property type="match status" value="1"/>
</dbReference>
<comment type="function">
    <text evidence="1">Bidirectionally degrades single-stranded DNA into large acid-insoluble oligonucleotides, which are then degraded further into small acid-soluble oligonucleotides.</text>
</comment>
<comment type="catalytic activity">
    <reaction evidence="1">
        <text>Exonucleolytic cleavage in either 5'- to 3'- or 3'- to 5'-direction to yield nucleoside 5'-phosphates.</text>
        <dbReference type="EC" id="3.1.11.6"/>
    </reaction>
</comment>
<comment type="subunit">
    <text evidence="1">Heterooligomer composed of large and small subunits.</text>
</comment>
<comment type="subcellular location">
    <subcellularLocation>
        <location evidence="1">Cytoplasm</location>
    </subcellularLocation>
</comment>
<comment type="similarity">
    <text evidence="1">Belongs to the XseB family.</text>
</comment>
<accession>A6T5F5</accession>
<feature type="chain" id="PRO_1000019584" description="Exodeoxyribonuclease 7 small subunit">
    <location>
        <begin position="1"/>
        <end position="80"/>
    </location>
</feature>
<sequence length="80" mass="8825">MPKKNEAPASFETALGELEQIVNRLESGDLPLEEALSEFERGVQLARQGQSQLQKAEQRVQILLADSEDSPTTPFTPDAE</sequence>
<keyword id="KW-0963">Cytoplasm</keyword>
<keyword id="KW-0269">Exonuclease</keyword>
<keyword id="KW-0378">Hydrolase</keyword>
<keyword id="KW-0540">Nuclease</keyword>
<proteinExistence type="inferred from homology"/>